<organism>
    <name type="scientific">Escherichia coli O9:H4 (strain HS)</name>
    <dbReference type="NCBI Taxonomy" id="331112"/>
    <lineage>
        <taxon>Bacteria</taxon>
        <taxon>Pseudomonadati</taxon>
        <taxon>Pseudomonadota</taxon>
        <taxon>Gammaproteobacteria</taxon>
        <taxon>Enterobacterales</taxon>
        <taxon>Enterobacteriaceae</taxon>
        <taxon>Escherichia</taxon>
    </lineage>
</organism>
<proteinExistence type="inferred from homology"/>
<evidence type="ECO:0000255" key="1">
    <source>
        <dbReference type="HAMAP-Rule" id="MF_01617"/>
    </source>
</evidence>
<feature type="chain" id="PRO_1000069484" description="Fatty acid oxidation complex subunit alpha">
    <location>
        <begin position="1"/>
        <end position="714"/>
    </location>
</feature>
<feature type="region of interest" description="Enoyl-CoA hydratase" evidence="1">
    <location>
        <begin position="1"/>
        <end position="190"/>
    </location>
</feature>
<feature type="region of interest" description="3-hydroxyacyl-CoA dehydrogenase" evidence="1">
    <location>
        <begin position="306"/>
        <end position="714"/>
    </location>
</feature>
<feature type="site" description="Important for catalytic activity" evidence="1">
    <location>
        <position position="118"/>
    </location>
</feature>
<feature type="site" description="Important for catalytic activity" evidence="1">
    <location>
        <position position="140"/>
    </location>
</feature>
<protein>
    <recommendedName>
        <fullName evidence="1">Fatty acid oxidation complex subunit alpha</fullName>
    </recommendedName>
    <domain>
        <recommendedName>
            <fullName evidence="1">Enoyl-CoA hydratase/3-hydroxybutyryl-CoA epimerase</fullName>
            <ecNumber evidence="1">4.2.1.17</ecNumber>
            <ecNumber evidence="1">5.1.2.3</ecNumber>
        </recommendedName>
    </domain>
    <domain>
        <recommendedName>
            <fullName evidence="1">3-hydroxyacyl-CoA dehydrogenase</fullName>
            <ecNumber evidence="1">1.1.1.35</ecNumber>
        </recommendedName>
    </domain>
</protein>
<comment type="function">
    <text evidence="1">Catalyzes the formation of a hydroxyacyl-CoA by addition of water on enoyl-CoA. Also exhibits 3-hydroxyacyl-CoA epimerase and 3-hydroxyacyl-CoA dehydrogenase activities.</text>
</comment>
<comment type="catalytic activity">
    <reaction evidence="1">
        <text>a (3S)-3-hydroxyacyl-CoA = a (2E)-enoyl-CoA + H2O</text>
        <dbReference type="Rhea" id="RHEA:16105"/>
        <dbReference type="ChEBI" id="CHEBI:15377"/>
        <dbReference type="ChEBI" id="CHEBI:57318"/>
        <dbReference type="ChEBI" id="CHEBI:58856"/>
        <dbReference type="EC" id="4.2.1.17"/>
    </reaction>
</comment>
<comment type="catalytic activity">
    <reaction evidence="1">
        <text>a 4-saturated-(3S)-3-hydroxyacyl-CoA = a (3E)-enoyl-CoA + H2O</text>
        <dbReference type="Rhea" id="RHEA:20724"/>
        <dbReference type="ChEBI" id="CHEBI:15377"/>
        <dbReference type="ChEBI" id="CHEBI:58521"/>
        <dbReference type="ChEBI" id="CHEBI:137480"/>
        <dbReference type="EC" id="4.2.1.17"/>
    </reaction>
</comment>
<comment type="catalytic activity">
    <reaction evidence="1">
        <text>a (3S)-3-hydroxyacyl-CoA + NAD(+) = a 3-oxoacyl-CoA + NADH + H(+)</text>
        <dbReference type="Rhea" id="RHEA:22432"/>
        <dbReference type="ChEBI" id="CHEBI:15378"/>
        <dbReference type="ChEBI" id="CHEBI:57318"/>
        <dbReference type="ChEBI" id="CHEBI:57540"/>
        <dbReference type="ChEBI" id="CHEBI:57945"/>
        <dbReference type="ChEBI" id="CHEBI:90726"/>
        <dbReference type="EC" id="1.1.1.35"/>
    </reaction>
</comment>
<comment type="catalytic activity">
    <reaction evidence="1">
        <text>(3S)-3-hydroxybutanoyl-CoA = (3R)-3-hydroxybutanoyl-CoA</text>
        <dbReference type="Rhea" id="RHEA:21760"/>
        <dbReference type="ChEBI" id="CHEBI:57315"/>
        <dbReference type="ChEBI" id="CHEBI:57316"/>
        <dbReference type="EC" id="5.1.2.3"/>
    </reaction>
</comment>
<comment type="pathway">
    <text evidence="1">Lipid metabolism; fatty acid beta-oxidation.</text>
</comment>
<comment type="subunit">
    <text evidence="1">Heterotetramer of two alpha chains (FadJ) and two beta chains (FadI).</text>
</comment>
<comment type="subcellular location">
    <subcellularLocation>
        <location evidence="1">Cytoplasm</location>
    </subcellularLocation>
</comment>
<comment type="similarity">
    <text evidence="1">In the N-terminal section; belongs to the enoyl-CoA hydratase/isomerase family.</text>
</comment>
<comment type="similarity">
    <text evidence="1">In the central section; belongs to the 3-hydroxyacyl-CoA dehydrogenase family.</text>
</comment>
<keyword id="KW-0963">Cytoplasm</keyword>
<keyword id="KW-0276">Fatty acid metabolism</keyword>
<keyword id="KW-0413">Isomerase</keyword>
<keyword id="KW-0442">Lipid degradation</keyword>
<keyword id="KW-0443">Lipid metabolism</keyword>
<keyword id="KW-0456">Lyase</keyword>
<keyword id="KW-0511">Multifunctional enzyme</keyword>
<keyword id="KW-0520">NAD</keyword>
<keyword id="KW-0560">Oxidoreductase</keyword>
<gene>
    <name evidence="1" type="primary">fadJ</name>
    <name type="ordered locus">EcHS_A2492</name>
</gene>
<sequence>MEMASAFTLNVRLDNIAIITIDVPDEKMNTLKAEFASQVRAIIKQLRENKELRGVVFISAKPDNFIAGADINMIGNCKTAQEAEALARQGQQLMAEIHALPIPVIAAIHGACLGGGLELALACHGRVCTDDPKTVLGLPEVQLGLLPGSGGTQRLPRLIGVSTALEMILTGKQLRAKQALKLGLVDDVVPHSILLEAAVELAKKDRPSSRPLPVRERILAGPLGRALLFKMVGKKTEHKTQGNYPATERILEVVETGLAQGTSSGYDAEARAFGELAMTPQSQALRSIFFASTDVKKDPGSDAPPAPLNSVGILGGGLMGAGIAYVTACKAGLPVRIKDINPQGINHALKYSWDQLEGKVRRRHLKASERDKQLALISGTTDYRGFAHRDLIIEAVFENLELKQQMVAEVEQNCAAHTIFASNTSSLPIGDIAAHAARPEQVIGLHFFSPVEKMPLVEIIPHAGTSAQTIATTVKLAKKQGKTPIVVRDKAGFYVNRILAPYINEAIRMLTEGERVEHIDAALVKFGFPVGPIQLLDEVGIDTGTKIIPVLEAAYGERFSAPANVVSSILNDDRKGRKNGRGFYLYGQKGRKSKKQVDPAIYPLIGAQGQGRLSAPQVAERCVMLMLNEAVRCVDEQVIRSVRDGDIGAVFGIGFPPFLGGPFRYIDSLGAGEVVAIMQRLATQYGSRFTPCERLVEMGARGESFWKTTATDLQ</sequence>
<dbReference type="EC" id="4.2.1.17" evidence="1"/>
<dbReference type="EC" id="5.1.2.3" evidence="1"/>
<dbReference type="EC" id="1.1.1.35" evidence="1"/>
<dbReference type="EMBL" id="CP000802">
    <property type="protein sequence ID" value="ABV06764.1"/>
    <property type="molecule type" value="Genomic_DNA"/>
</dbReference>
<dbReference type="RefSeq" id="WP_000424985.1">
    <property type="nucleotide sequence ID" value="NC_009800.1"/>
</dbReference>
<dbReference type="SMR" id="A8A2L0"/>
<dbReference type="KEGG" id="ecx:EcHS_A2492"/>
<dbReference type="HOGENOM" id="CLU_009834_16_1_6"/>
<dbReference type="UniPathway" id="UPA00659"/>
<dbReference type="GO" id="GO:0005737">
    <property type="term" value="C:cytoplasm"/>
    <property type="evidence" value="ECO:0007669"/>
    <property type="project" value="UniProtKB-SubCell"/>
</dbReference>
<dbReference type="GO" id="GO:0008692">
    <property type="term" value="F:3-hydroxybutyryl-CoA epimerase activity"/>
    <property type="evidence" value="ECO:0007669"/>
    <property type="project" value="UniProtKB-UniRule"/>
</dbReference>
<dbReference type="GO" id="GO:0004300">
    <property type="term" value="F:enoyl-CoA hydratase activity"/>
    <property type="evidence" value="ECO:0007669"/>
    <property type="project" value="UniProtKB-UniRule"/>
</dbReference>
<dbReference type="GO" id="GO:0016509">
    <property type="term" value="F:long-chain-3-hydroxyacyl-CoA dehydrogenase activity"/>
    <property type="evidence" value="ECO:0007669"/>
    <property type="project" value="TreeGrafter"/>
</dbReference>
<dbReference type="GO" id="GO:0070403">
    <property type="term" value="F:NAD+ binding"/>
    <property type="evidence" value="ECO:0007669"/>
    <property type="project" value="InterPro"/>
</dbReference>
<dbReference type="GO" id="GO:0006635">
    <property type="term" value="P:fatty acid beta-oxidation"/>
    <property type="evidence" value="ECO:0007669"/>
    <property type="project" value="UniProtKB-UniRule"/>
</dbReference>
<dbReference type="CDD" id="cd06558">
    <property type="entry name" value="crotonase-like"/>
    <property type="match status" value="1"/>
</dbReference>
<dbReference type="FunFam" id="1.10.1040.50:FF:000003">
    <property type="entry name" value="Fatty acid oxidation complex subunit alpha"/>
    <property type="match status" value="1"/>
</dbReference>
<dbReference type="FunFam" id="3.90.226.10:FF:000011">
    <property type="entry name" value="Fatty acid oxidation complex subunit alpha"/>
    <property type="match status" value="1"/>
</dbReference>
<dbReference type="FunFam" id="3.40.50.720:FF:000009">
    <property type="entry name" value="Fatty oxidation complex, alpha subunit"/>
    <property type="match status" value="1"/>
</dbReference>
<dbReference type="Gene3D" id="1.10.1040.50">
    <property type="match status" value="1"/>
</dbReference>
<dbReference type="Gene3D" id="3.90.226.10">
    <property type="entry name" value="2-enoyl-CoA Hydratase, Chain A, domain 1"/>
    <property type="match status" value="1"/>
</dbReference>
<dbReference type="Gene3D" id="3.40.50.720">
    <property type="entry name" value="NAD(P)-binding Rossmann-like Domain"/>
    <property type="match status" value="1"/>
</dbReference>
<dbReference type="HAMAP" id="MF_01617">
    <property type="entry name" value="FadJ"/>
    <property type="match status" value="1"/>
</dbReference>
<dbReference type="InterPro" id="IPR006180">
    <property type="entry name" value="3-OHacyl-CoA_DH_CS"/>
</dbReference>
<dbReference type="InterPro" id="IPR006176">
    <property type="entry name" value="3-OHacyl-CoA_DH_NAD-bd"/>
</dbReference>
<dbReference type="InterPro" id="IPR006108">
    <property type="entry name" value="3HC_DH_C"/>
</dbReference>
<dbReference type="InterPro" id="IPR008927">
    <property type="entry name" value="6-PGluconate_DH-like_C_sf"/>
</dbReference>
<dbReference type="InterPro" id="IPR029045">
    <property type="entry name" value="ClpP/crotonase-like_dom_sf"/>
</dbReference>
<dbReference type="InterPro" id="IPR001753">
    <property type="entry name" value="Enoyl-CoA_hydra/iso"/>
</dbReference>
<dbReference type="InterPro" id="IPR050136">
    <property type="entry name" value="FA_oxidation_alpha_subunit"/>
</dbReference>
<dbReference type="InterPro" id="IPR012802">
    <property type="entry name" value="FadJ"/>
</dbReference>
<dbReference type="InterPro" id="IPR036291">
    <property type="entry name" value="NAD(P)-bd_dom_sf"/>
</dbReference>
<dbReference type="NCBIfam" id="TIGR02440">
    <property type="entry name" value="FadJ"/>
    <property type="match status" value="1"/>
</dbReference>
<dbReference type="NCBIfam" id="NF008363">
    <property type="entry name" value="PRK11154.1"/>
    <property type="match status" value="1"/>
</dbReference>
<dbReference type="PANTHER" id="PTHR43612">
    <property type="entry name" value="TRIFUNCTIONAL ENZYME SUBUNIT ALPHA"/>
    <property type="match status" value="1"/>
</dbReference>
<dbReference type="PANTHER" id="PTHR43612:SF3">
    <property type="entry name" value="TRIFUNCTIONAL ENZYME SUBUNIT ALPHA, MITOCHONDRIAL"/>
    <property type="match status" value="1"/>
</dbReference>
<dbReference type="Pfam" id="PF00725">
    <property type="entry name" value="3HCDH"/>
    <property type="match status" value="2"/>
</dbReference>
<dbReference type="Pfam" id="PF02737">
    <property type="entry name" value="3HCDH_N"/>
    <property type="match status" value="1"/>
</dbReference>
<dbReference type="Pfam" id="PF00378">
    <property type="entry name" value="ECH_1"/>
    <property type="match status" value="1"/>
</dbReference>
<dbReference type="SUPFAM" id="SSF48179">
    <property type="entry name" value="6-phosphogluconate dehydrogenase C-terminal domain-like"/>
    <property type="match status" value="2"/>
</dbReference>
<dbReference type="SUPFAM" id="SSF52096">
    <property type="entry name" value="ClpP/crotonase"/>
    <property type="match status" value="1"/>
</dbReference>
<dbReference type="SUPFAM" id="SSF51735">
    <property type="entry name" value="NAD(P)-binding Rossmann-fold domains"/>
    <property type="match status" value="1"/>
</dbReference>
<dbReference type="PROSITE" id="PS00067">
    <property type="entry name" value="3HCDH"/>
    <property type="match status" value="1"/>
</dbReference>
<accession>A8A2L0</accession>
<name>FADJ_ECOHS</name>
<reference key="1">
    <citation type="journal article" date="2008" name="J. Bacteriol.">
        <title>The pangenome structure of Escherichia coli: comparative genomic analysis of E. coli commensal and pathogenic isolates.</title>
        <authorList>
            <person name="Rasko D.A."/>
            <person name="Rosovitz M.J."/>
            <person name="Myers G.S.A."/>
            <person name="Mongodin E.F."/>
            <person name="Fricke W.F."/>
            <person name="Gajer P."/>
            <person name="Crabtree J."/>
            <person name="Sebaihia M."/>
            <person name="Thomson N.R."/>
            <person name="Chaudhuri R."/>
            <person name="Henderson I.R."/>
            <person name="Sperandio V."/>
            <person name="Ravel J."/>
        </authorList>
    </citation>
    <scope>NUCLEOTIDE SEQUENCE [LARGE SCALE GENOMIC DNA]</scope>
    <source>
        <strain>HS</strain>
    </source>
</reference>